<comment type="function">
    <text evidence="2">Catalyzes the reversible conversion of 2-phosphoglycerate (2-PG) into phosphoenolpyruvate (PEP). It is essential for the degradation of carbohydrates via glycolysis.</text>
</comment>
<comment type="function">
    <text evidence="3">'Moonlights' as a plasminogen receptor and plasmin activator. Binds host (human) plasminogen in vitro; enhances the activity of host tissue-specific plasminogen activator (tPA) (PubMed:36701429).</text>
</comment>
<comment type="catalytic activity">
    <reaction evidence="2">
        <text>(2R)-2-phosphoglycerate = phosphoenolpyruvate + H2O</text>
        <dbReference type="Rhea" id="RHEA:10164"/>
        <dbReference type="ChEBI" id="CHEBI:15377"/>
        <dbReference type="ChEBI" id="CHEBI:58289"/>
        <dbReference type="ChEBI" id="CHEBI:58702"/>
        <dbReference type="EC" id="4.2.1.11"/>
    </reaction>
</comment>
<comment type="cofactor">
    <cofactor evidence="2">
        <name>Mg(2+)</name>
        <dbReference type="ChEBI" id="CHEBI:18420"/>
    </cofactor>
    <text evidence="2">Binds a second Mg(2+) ion via substrate during catalysis.</text>
</comment>
<comment type="pathway">
    <text evidence="2">Carbohydrate degradation; glycolysis; pyruvate from D-glyceraldehyde 3-phosphate: step 4/5.</text>
</comment>
<comment type="subunit">
    <text evidence="3">Homooctamer (PubMed:36701429).</text>
</comment>
<comment type="subcellular location">
    <subcellularLocation>
        <location evidence="2">Cytoplasm</location>
    </subcellularLocation>
    <subcellularLocation>
        <location evidence="2">Secreted</location>
    </subcellularLocation>
    <subcellularLocation>
        <location evidence="2">Cell surface</location>
    </subcellularLocation>
    <text evidence="2">Fractions of enolase are present in both the cytoplasm and on the cell surface.</text>
</comment>
<comment type="similarity">
    <text evidence="2">Belongs to the enolase family.</text>
</comment>
<protein>
    <recommendedName>
        <fullName evidence="2">Enolase</fullName>
        <ecNumber evidence="2">4.2.1.11</ecNumber>
    </recommendedName>
    <alternativeName>
        <fullName evidence="2">2-phospho-D-glycerate hydro-lyase</fullName>
    </alternativeName>
    <alternativeName>
        <fullName evidence="2">2-phosphoglycerate dehydratase</fullName>
    </alternativeName>
</protein>
<organism>
    <name type="scientific">Streptococcus pyogenes serotype M1</name>
    <dbReference type="NCBI Taxonomy" id="301447"/>
    <lineage>
        <taxon>Bacteria</taxon>
        <taxon>Bacillati</taxon>
        <taxon>Bacillota</taxon>
        <taxon>Bacilli</taxon>
        <taxon>Lactobacillales</taxon>
        <taxon>Streptococcaceae</taxon>
        <taxon>Streptococcus</taxon>
    </lineage>
</organism>
<evidence type="ECO:0000250" key="1"/>
<evidence type="ECO:0000255" key="2">
    <source>
        <dbReference type="HAMAP-Rule" id="MF_00318"/>
    </source>
</evidence>
<evidence type="ECO:0000269" key="3">
    <source>
    </source>
</evidence>
<evidence type="ECO:0000305" key="4"/>
<evidence type="ECO:0007744" key="5">
    <source>
        <dbReference type="PDB" id="7UGU"/>
    </source>
</evidence>
<evidence type="ECO:0007744" key="6">
    <source>
        <dbReference type="PDB" id="8DG4"/>
    </source>
</evidence>
<evidence type="ECO:0007829" key="7">
    <source>
        <dbReference type="PDB" id="7UGU"/>
    </source>
</evidence>
<evidence type="ECO:0007829" key="8">
    <source>
        <dbReference type="PDB" id="8DG4"/>
    </source>
</evidence>
<keyword id="KW-0002">3D-structure</keyword>
<keyword id="KW-0963">Cytoplasm</keyword>
<keyword id="KW-0324">Glycolysis</keyword>
<keyword id="KW-0456">Lyase</keyword>
<keyword id="KW-0460">Magnesium</keyword>
<keyword id="KW-0479">Metal-binding</keyword>
<keyword id="KW-1185">Reference proteome</keyword>
<keyword id="KW-0964">Secreted</keyword>
<sequence length="435" mass="47356">MSIITDVYAREVLDSRGNPTLEVEVYTESGAFGRGMVPSGASTGEHEAVELRDGDKSRYLGLGTQKAVDNVNNIIAEAIIGYDVRDQQAIDRAMIALDGTPNKGKLGANAILGVSIAVARAAADYLEVPLYTYLGGFNTKVLPTPMMNIINGGSHSDAPIAFQEFMIMPVGAPTFKEGLRWGAEVFHALKKILKERGLVTAVGDEGGFAPKFEGTEDGVETILKAIEAAGYEAGENGIMIGFDCASSEFYDKERKVYDYTKFEGEGAAVRTSAEQVDYLEELVNKYPIITIEDGMDENDWDGWKVLTERLGKRVQLVGDDFFVTNTEYLARGIKENAANSILIKVNQIGTLTETFEAIEMAKEAGYTAVVSHRSGETEDSTIADIAVATNAGQIKTGSLSRTDRIAKYNQLLRIEDQLGEVAQYKGIKSFYNLKK</sequence>
<proteinExistence type="evidence at protein level"/>
<reference key="1">
    <citation type="journal article" date="2001" name="Proc. Natl. Acad. Sci. U.S.A.">
        <title>Complete genome sequence of an M1 strain of Streptococcus pyogenes.</title>
        <authorList>
            <person name="Ferretti J.J."/>
            <person name="McShan W.M."/>
            <person name="Ajdic D.J."/>
            <person name="Savic D.J."/>
            <person name="Savic G."/>
            <person name="Lyon K."/>
            <person name="Primeaux C."/>
            <person name="Sezate S."/>
            <person name="Suvorov A.N."/>
            <person name="Kenton S."/>
            <person name="Lai H.S."/>
            <person name="Lin S.P."/>
            <person name="Qian Y."/>
            <person name="Jia H.G."/>
            <person name="Najar F.Z."/>
            <person name="Ren Q."/>
            <person name="Zhu H."/>
            <person name="Song L."/>
            <person name="White J."/>
            <person name="Yuan X."/>
            <person name="Clifton S.W."/>
            <person name="Roe B.A."/>
            <person name="McLaughlin R.E."/>
        </authorList>
    </citation>
    <scope>NUCLEOTIDE SEQUENCE [LARGE SCALE GENOMIC DNA]</scope>
    <source>
        <strain>ATCC 700294 / SF370 / Serotype M1</strain>
    </source>
</reference>
<reference key="2">
    <citation type="journal article" date="2005" name="J. Infect. Dis.">
        <title>Evolutionary origin and emergence of a highly successful clone of serotype M1 group A Streptococcus involved multiple horizontal gene transfer events.</title>
        <authorList>
            <person name="Sumby P."/>
            <person name="Porcella S.F."/>
            <person name="Madrigal A.G."/>
            <person name="Barbian K.D."/>
            <person name="Virtaneva K."/>
            <person name="Ricklefs S.M."/>
            <person name="Sturdevant D.E."/>
            <person name="Graham M.R."/>
            <person name="Vuopio-Varkila J."/>
            <person name="Hoe N.P."/>
            <person name="Musser J.M."/>
        </authorList>
    </citation>
    <scope>NUCLEOTIDE SEQUENCE [LARGE SCALE GENOMIC DNA]</scope>
    <source>
        <strain>ATCC BAA-947 / MGAS5005 / Serotype M1</strain>
    </source>
</reference>
<reference key="3">
    <citation type="submission" date="2014-04" db="EMBL/GenBank/DDBJ databases">
        <authorList>
            <person name="Beres S.B."/>
            <person name="Musser J.M."/>
        </authorList>
    </citation>
    <scope>SEQUENCE REVISION TO 57</scope>
</reference>
<reference evidence="5 6" key="4">
    <citation type="journal article" date="2023" name="Biochemistry">
        <title>High-Resolution Single-Particle Cryo-EM Hydrated Structure of Streptococcus pyogenes Enolase Offers Insights into Its Function as a Plasminogen Receptor.</title>
        <authorList>
            <person name="Tjia-Fleck S."/>
            <person name="Readnour B.M."/>
            <person name="Ayinuola Y.A."/>
            <person name="Castellino F.J."/>
        </authorList>
    </citation>
    <scope>STRUCTURE BY ELECTRON MICROSCOPY (2.60 ANGSTROMS)</scope>
    <scope>PLASMINOGEN-BINDING</scope>
    <scope>SUBUNIT</scope>
    <scope>MUTAGENESIS OF 434-LYS-LYS-435</scope>
    <source>
        <strain>AP53 / Serotype M53</strain>
    </source>
</reference>
<gene>
    <name evidence="2" type="primary">eno</name>
    <name type="ordered locus">SPy_0731</name>
    <name type="ordered locus">M5005_Spy0556</name>
</gene>
<accession>P69949</accession>
<accession>P82479</accession>
<accession>Q48ZP4</accession>
<dbReference type="EC" id="4.2.1.11" evidence="2"/>
<dbReference type="EMBL" id="AE004092">
    <property type="protein sequence ID" value="AAK33680.1"/>
    <property type="molecule type" value="Genomic_DNA"/>
</dbReference>
<dbReference type="EMBL" id="CP000017">
    <property type="protein sequence ID" value="AAZ51174.2"/>
    <property type="molecule type" value="Genomic_DNA"/>
</dbReference>
<dbReference type="RefSeq" id="NP_268959.1">
    <property type="nucleotide sequence ID" value="NC_002737.2"/>
</dbReference>
<dbReference type="PDB" id="7UGU">
    <property type="method" value="EM"/>
    <property type="resolution" value="2.60 A"/>
    <property type="chains" value="A/B/C/D/E/F/G/H=1-435"/>
</dbReference>
<dbReference type="PDB" id="8DG4">
    <property type="method" value="EM"/>
    <property type="resolution" value="3.12 A"/>
    <property type="chains" value="A/B/C/D/E/F/G/H=1-435"/>
</dbReference>
<dbReference type="PDB" id="8UOP">
    <property type="method" value="EM"/>
    <property type="resolution" value="3.80 A"/>
    <property type="chains" value="A/B=1-435"/>
</dbReference>
<dbReference type="PDB" id="8UOY">
    <property type="method" value="EM"/>
    <property type="resolution" value="3.40 A"/>
    <property type="chains" value="B/C=1-435"/>
</dbReference>
<dbReference type="PDBsum" id="7UGU"/>
<dbReference type="PDBsum" id="8DG4"/>
<dbReference type="PDBsum" id="8UOP"/>
<dbReference type="PDBsum" id="8UOY"/>
<dbReference type="EMDB" id="EMD-27407"/>
<dbReference type="SMR" id="P69949"/>
<dbReference type="PaxDb" id="1314-HKU360_00567"/>
<dbReference type="KEGG" id="spy:SPy_0731"/>
<dbReference type="KEGG" id="spz:M5005_Spy0556"/>
<dbReference type="PATRIC" id="fig|160490.10.peg.622"/>
<dbReference type="HOGENOM" id="CLU_031223_2_1_9"/>
<dbReference type="OMA" id="RCMMSHR"/>
<dbReference type="UniPathway" id="UPA00109">
    <property type="reaction ID" value="UER00187"/>
</dbReference>
<dbReference type="Proteomes" id="UP000000750">
    <property type="component" value="Chromosome"/>
</dbReference>
<dbReference type="GO" id="GO:0009986">
    <property type="term" value="C:cell surface"/>
    <property type="evidence" value="ECO:0007669"/>
    <property type="project" value="UniProtKB-SubCell"/>
</dbReference>
<dbReference type="GO" id="GO:0005576">
    <property type="term" value="C:extracellular region"/>
    <property type="evidence" value="ECO:0007669"/>
    <property type="project" value="UniProtKB-SubCell"/>
</dbReference>
<dbReference type="GO" id="GO:0009274">
    <property type="term" value="C:peptidoglycan-based cell wall"/>
    <property type="evidence" value="ECO:0007669"/>
    <property type="project" value="UniProtKB-ARBA"/>
</dbReference>
<dbReference type="GO" id="GO:0000015">
    <property type="term" value="C:phosphopyruvate hydratase complex"/>
    <property type="evidence" value="ECO:0007669"/>
    <property type="project" value="InterPro"/>
</dbReference>
<dbReference type="GO" id="GO:0000287">
    <property type="term" value="F:magnesium ion binding"/>
    <property type="evidence" value="ECO:0007669"/>
    <property type="project" value="UniProtKB-UniRule"/>
</dbReference>
<dbReference type="GO" id="GO:0004634">
    <property type="term" value="F:phosphopyruvate hydratase activity"/>
    <property type="evidence" value="ECO:0007669"/>
    <property type="project" value="UniProtKB-UniRule"/>
</dbReference>
<dbReference type="GO" id="GO:0006096">
    <property type="term" value="P:glycolytic process"/>
    <property type="evidence" value="ECO:0007669"/>
    <property type="project" value="UniProtKB-UniRule"/>
</dbReference>
<dbReference type="CDD" id="cd03313">
    <property type="entry name" value="enolase"/>
    <property type="match status" value="1"/>
</dbReference>
<dbReference type="FunFam" id="3.20.20.120:FF:000001">
    <property type="entry name" value="Enolase"/>
    <property type="match status" value="1"/>
</dbReference>
<dbReference type="FunFam" id="3.30.390.10:FF:000001">
    <property type="entry name" value="Enolase"/>
    <property type="match status" value="1"/>
</dbReference>
<dbReference type="Gene3D" id="3.20.20.120">
    <property type="entry name" value="Enolase-like C-terminal domain"/>
    <property type="match status" value="1"/>
</dbReference>
<dbReference type="Gene3D" id="3.30.390.10">
    <property type="entry name" value="Enolase-like, N-terminal domain"/>
    <property type="match status" value="1"/>
</dbReference>
<dbReference type="HAMAP" id="MF_00318">
    <property type="entry name" value="Enolase"/>
    <property type="match status" value="1"/>
</dbReference>
<dbReference type="InterPro" id="IPR000941">
    <property type="entry name" value="Enolase"/>
</dbReference>
<dbReference type="InterPro" id="IPR036849">
    <property type="entry name" value="Enolase-like_C_sf"/>
</dbReference>
<dbReference type="InterPro" id="IPR029017">
    <property type="entry name" value="Enolase-like_N"/>
</dbReference>
<dbReference type="InterPro" id="IPR020810">
    <property type="entry name" value="Enolase_C"/>
</dbReference>
<dbReference type="InterPro" id="IPR020809">
    <property type="entry name" value="Enolase_CS"/>
</dbReference>
<dbReference type="InterPro" id="IPR020811">
    <property type="entry name" value="Enolase_N"/>
</dbReference>
<dbReference type="NCBIfam" id="TIGR01060">
    <property type="entry name" value="eno"/>
    <property type="match status" value="1"/>
</dbReference>
<dbReference type="PANTHER" id="PTHR11902">
    <property type="entry name" value="ENOLASE"/>
    <property type="match status" value="1"/>
</dbReference>
<dbReference type="PANTHER" id="PTHR11902:SF1">
    <property type="entry name" value="ENOLASE"/>
    <property type="match status" value="1"/>
</dbReference>
<dbReference type="Pfam" id="PF00113">
    <property type="entry name" value="Enolase_C"/>
    <property type="match status" value="1"/>
</dbReference>
<dbReference type="Pfam" id="PF03952">
    <property type="entry name" value="Enolase_N"/>
    <property type="match status" value="1"/>
</dbReference>
<dbReference type="PIRSF" id="PIRSF001400">
    <property type="entry name" value="Enolase"/>
    <property type="match status" value="1"/>
</dbReference>
<dbReference type="PRINTS" id="PR00148">
    <property type="entry name" value="ENOLASE"/>
</dbReference>
<dbReference type="SFLD" id="SFLDS00001">
    <property type="entry name" value="Enolase"/>
    <property type="match status" value="1"/>
</dbReference>
<dbReference type="SFLD" id="SFLDF00002">
    <property type="entry name" value="enolase"/>
    <property type="match status" value="1"/>
</dbReference>
<dbReference type="SMART" id="SM01192">
    <property type="entry name" value="Enolase_C"/>
    <property type="match status" value="1"/>
</dbReference>
<dbReference type="SMART" id="SM01193">
    <property type="entry name" value="Enolase_N"/>
    <property type="match status" value="1"/>
</dbReference>
<dbReference type="SUPFAM" id="SSF51604">
    <property type="entry name" value="Enolase C-terminal domain-like"/>
    <property type="match status" value="1"/>
</dbReference>
<dbReference type="SUPFAM" id="SSF54826">
    <property type="entry name" value="Enolase N-terminal domain-like"/>
    <property type="match status" value="1"/>
</dbReference>
<dbReference type="PROSITE" id="PS00164">
    <property type="entry name" value="ENOLASE"/>
    <property type="match status" value="1"/>
</dbReference>
<name>ENO_STRP1</name>
<feature type="initiator methionine" description="Removed" evidence="1">
    <location>
        <position position="1"/>
    </location>
</feature>
<feature type="chain" id="PRO_0000133982" description="Enolase">
    <location>
        <begin position="2"/>
        <end position="435"/>
    </location>
</feature>
<feature type="active site" description="Proton donor" evidence="2">
    <location>
        <position position="205"/>
    </location>
</feature>
<feature type="active site" description="Proton acceptor" evidence="2">
    <location>
        <position position="344"/>
    </location>
</feature>
<feature type="binding site" evidence="2">
    <location>
        <position position="155"/>
    </location>
    <ligand>
        <name>substrate</name>
    </ligand>
</feature>
<feature type="binding site" evidence="2">
    <location>
        <position position="164"/>
    </location>
    <ligand>
        <name>substrate</name>
    </ligand>
</feature>
<feature type="binding site" evidence="2">
    <location>
        <position position="243"/>
    </location>
    <ligand>
        <name>Mg(2+)</name>
        <dbReference type="ChEBI" id="CHEBI:18420"/>
    </ligand>
</feature>
<feature type="binding site" evidence="2">
    <location>
        <position position="292"/>
    </location>
    <ligand>
        <name>Mg(2+)</name>
        <dbReference type="ChEBI" id="CHEBI:18420"/>
    </ligand>
</feature>
<feature type="binding site" evidence="2">
    <location>
        <position position="292"/>
    </location>
    <ligand>
        <name>substrate</name>
    </ligand>
</feature>
<feature type="binding site" evidence="2">
    <location>
        <position position="319"/>
    </location>
    <ligand>
        <name>Mg(2+)</name>
        <dbReference type="ChEBI" id="CHEBI:18420"/>
    </ligand>
</feature>
<feature type="binding site" evidence="2">
    <location>
        <position position="319"/>
    </location>
    <ligand>
        <name>substrate</name>
    </ligand>
</feature>
<feature type="binding site" description="covalent; in inhibited form" evidence="2">
    <location>
        <position position="344"/>
    </location>
    <ligand>
        <name>substrate</name>
    </ligand>
</feature>
<feature type="binding site" evidence="2">
    <location>
        <begin position="371"/>
        <end position="374"/>
    </location>
    <ligand>
        <name>substrate</name>
    </ligand>
</feature>
<feature type="binding site" evidence="2">
    <location>
        <position position="395"/>
    </location>
    <ligand>
        <name>substrate</name>
    </ligand>
</feature>
<feature type="mutagenesis site" description="Only about 75% of the protein is octomeric, no change in human plasminogen binding, no change in plasminogen activation." evidence="3">
    <original>KK</original>
    <variation>AA</variation>
    <location>
        <begin position="434"/>
        <end position="435"/>
    </location>
</feature>
<feature type="sequence conflict" description="In Ref. 2; AAZ51174." evidence="4" ref="2">
    <original>GD</original>
    <variation>VS</variation>
    <location>
        <begin position="54"/>
        <end position="55"/>
    </location>
</feature>
<feature type="strand" evidence="7">
    <location>
        <begin position="3"/>
        <end position="13"/>
    </location>
</feature>
<feature type="strand" evidence="7">
    <location>
        <begin position="19"/>
        <end position="27"/>
    </location>
</feature>
<feature type="strand" evidence="7">
    <location>
        <begin position="32"/>
        <end position="36"/>
    </location>
</feature>
<feature type="strand" evidence="7">
    <location>
        <begin position="43"/>
        <end position="45"/>
    </location>
</feature>
<feature type="helix" evidence="7">
    <location>
        <begin position="59"/>
        <end position="61"/>
    </location>
</feature>
<feature type="helix" evidence="7">
    <location>
        <begin position="65"/>
        <end position="73"/>
    </location>
</feature>
<feature type="helix" evidence="7">
    <location>
        <begin position="75"/>
        <end position="79"/>
    </location>
</feature>
<feature type="helix" evidence="7">
    <location>
        <begin position="87"/>
        <end position="98"/>
    </location>
</feature>
<feature type="turn" evidence="7">
    <location>
        <begin position="104"/>
        <end position="106"/>
    </location>
</feature>
<feature type="helix" evidence="7">
    <location>
        <begin position="108"/>
        <end position="125"/>
    </location>
</feature>
<feature type="helix" evidence="7">
    <location>
        <begin position="130"/>
        <end position="135"/>
    </location>
</feature>
<feature type="strand" evidence="7">
    <location>
        <begin position="144"/>
        <end position="151"/>
    </location>
</feature>
<feature type="helix" evidence="7">
    <location>
        <begin position="153"/>
        <end position="155"/>
    </location>
</feature>
<feature type="strand" evidence="7">
    <location>
        <begin position="157"/>
        <end position="159"/>
    </location>
</feature>
<feature type="strand" evidence="7">
    <location>
        <begin position="164"/>
        <end position="168"/>
    </location>
</feature>
<feature type="helix" evidence="7">
    <location>
        <begin position="175"/>
        <end position="195"/>
    </location>
</feature>
<feature type="helix" evidence="7">
    <location>
        <begin position="215"/>
        <end position="229"/>
    </location>
</feature>
<feature type="strand" evidence="7">
    <location>
        <begin position="237"/>
        <end position="243"/>
    </location>
</feature>
<feature type="helix" evidence="7">
    <location>
        <begin position="246"/>
        <end position="248"/>
    </location>
</feature>
<feature type="strand" evidence="8">
    <location>
        <begin position="249"/>
        <end position="251"/>
    </location>
</feature>
<feature type="turn" evidence="7">
    <location>
        <begin position="252"/>
        <end position="255"/>
    </location>
</feature>
<feature type="strand" evidence="7">
    <location>
        <begin position="256"/>
        <end position="258"/>
    </location>
</feature>
<feature type="helix" evidence="7">
    <location>
        <begin position="259"/>
        <end position="261"/>
    </location>
</feature>
<feature type="helix" evidence="7">
    <location>
        <begin position="272"/>
        <end position="285"/>
    </location>
</feature>
<feature type="strand" evidence="7">
    <location>
        <begin position="288"/>
        <end position="293"/>
    </location>
</feature>
<feature type="helix" evidence="7">
    <location>
        <begin position="300"/>
        <end position="310"/>
    </location>
</feature>
<feature type="turn" evidence="7">
    <location>
        <begin position="311"/>
        <end position="313"/>
    </location>
</feature>
<feature type="strand" evidence="7">
    <location>
        <begin position="314"/>
        <end position="319"/>
    </location>
</feature>
<feature type="turn" evidence="7">
    <location>
        <begin position="320"/>
        <end position="324"/>
    </location>
</feature>
<feature type="helix" evidence="7">
    <location>
        <begin position="326"/>
        <end position="334"/>
    </location>
</feature>
<feature type="strand" evidence="7">
    <location>
        <begin position="339"/>
        <end position="343"/>
    </location>
</feature>
<feature type="helix" evidence="7">
    <location>
        <begin position="345"/>
        <end position="348"/>
    </location>
</feature>
<feature type="helix" evidence="7">
    <location>
        <begin position="351"/>
        <end position="363"/>
    </location>
</feature>
<feature type="strand" evidence="7">
    <location>
        <begin position="367"/>
        <end position="371"/>
    </location>
</feature>
<feature type="helix" evidence="7">
    <location>
        <begin position="381"/>
        <end position="388"/>
    </location>
</feature>
<feature type="strand" evidence="7">
    <location>
        <begin position="393"/>
        <end position="395"/>
    </location>
</feature>
<feature type="strand" evidence="7">
    <location>
        <begin position="399"/>
        <end position="401"/>
    </location>
</feature>
<feature type="helix" evidence="7">
    <location>
        <begin position="402"/>
        <end position="418"/>
    </location>
</feature>
<feature type="helix" evidence="7">
    <location>
        <begin position="419"/>
        <end position="421"/>
    </location>
</feature>
<feature type="helix" evidence="7">
    <location>
        <begin position="426"/>
        <end position="429"/>
    </location>
</feature>